<comment type="function">
    <text evidence="4">Copper (Cu) transporter that mediates Cu transport in root vacuoles. Involved in Cu detoxification by sequestrating Cu into root vacuoles and limiting translocation of Cu from the roots to the shoots, and accumulation in grains.</text>
</comment>
<comment type="catalytic activity">
    <reaction evidence="4">
        <text>Cu(+)(in) + ATP + H2O = Cu(+)(out) + ADP + phosphate + H(+)</text>
        <dbReference type="Rhea" id="RHEA:25792"/>
        <dbReference type="ChEBI" id="CHEBI:15377"/>
        <dbReference type="ChEBI" id="CHEBI:15378"/>
        <dbReference type="ChEBI" id="CHEBI:30616"/>
        <dbReference type="ChEBI" id="CHEBI:43474"/>
        <dbReference type="ChEBI" id="CHEBI:49552"/>
        <dbReference type="ChEBI" id="CHEBI:456216"/>
        <dbReference type="EC" id="7.2.2.8"/>
    </reaction>
</comment>
<comment type="subcellular location">
    <subcellularLocation>
        <location evidence="4">Vacuole membrane</location>
        <topology evidence="1">Multi-pass membrane protein</topology>
    </subcellularLocation>
</comment>
<comment type="tissue specificity">
    <text evidence="4">Highly expressed in roots. Expressed in vascular tissues of the stele, mainly in pericycle cells.</text>
</comment>
<comment type="induction">
    <text evidence="4">Induced by copper in roots, but not in shoots.</text>
</comment>
<comment type="polymorphism">
    <text evidence="4">A single amino acid substitution of Val-914 to Ala increases HMA4 copper transport activity. This allele is found in a number of rice cultivars, such as cv. Lemont, and is associated with low accumulation of copper in rice grains. Identification of natural allelic variation in HMA4 may facilitate the development of rice varieties with grain copper concentrations adapted to dietary needs in function of the copper concentration in soil.</text>
</comment>
<comment type="disruption phenotype">
    <text evidence="4">Reduced plant height and biomass. Reduced fertility. Increased levels of copper in grain, leaf sheath and internodes.</text>
</comment>
<comment type="similarity">
    <text evidence="6">Belongs to the cation transport ATPase (P-type) (TC 3.A.3) family. Type IB subfamily.</text>
</comment>
<gene>
    <name evidence="5" type="primary">HMA4</name>
    <name evidence="9" type="ordered locus">Os02g0196600</name>
    <name evidence="6" type="ordered locus">LOC_Os02g10290</name>
    <name evidence="7" type="ORF">OJ1225_F07.30</name>
    <name evidence="8" type="ORF">OJ1524_D08.15</name>
    <name evidence="10" type="ORF">OsJ_05752</name>
</gene>
<evidence type="ECO:0000255" key="1"/>
<evidence type="ECO:0000255" key="2">
    <source>
        <dbReference type="PROSITE-ProRule" id="PRU00280"/>
    </source>
</evidence>
<evidence type="ECO:0000256" key="3">
    <source>
        <dbReference type="SAM" id="MobiDB-lite"/>
    </source>
</evidence>
<evidence type="ECO:0000269" key="4">
    <source>
    </source>
</evidence>
<evidence type="ECO:0000303" key="5">
    <source>
    </source>
</evidence>
<evidence type="ECO:0000305" key="6"/>
<evidence type="ECO:0000312" key="7">
    <source>
        <dbReference type="EMBL" id="BAD25263.1"/>
    </source>
</evidence>
<evidence type="ECO:0000312" key="8">
    <source>
        <dbReference type="EMBL" id="BAD25276.1"/>
    </source>
</evidence>
<evidence type="ECO:0000312" key="9">
    <source>
        <dbReference type="EMBL" id="BAF08107.1"/>
    </source>
</evidence>
<evidence type="ECO:0000312" key="10">
    <source>
        <dbReference type="EMBL" id="EAZ22091.1"/>
    </source>
</evidence>
<evidence type="ECO:0007829" key="11">
    <source>
        <dbReference type="PDB" id="8Q76"/>
    </source>
</evidence>
<keyword id="KW-0002">3D-structure</keyword>
<keyword id="KW-0067">ATP-binding</keyword>
<keyword id="KW-0186">Copper</keyword>
<keyword id="KW-0406">Ion transport</keyword>
<keyword id="KW-0472">Membrane</keyword>
<keyword id="KW-0479">Metal-binding</keyword>
<keyword id="KW-0547">Nucleotide-binding</keyword>
<keyword id="KW-1185">Reference proteome</keyword>
<keyword id="KW-0677">Repeat</keyword>
<keyword id="KW-1278">Translocase</keyword>
<keyword id="KW-0812">Transmembrane</keyword>
<keyword id="KW-1133">Transmembrane helix</keyword>
<keyword id="KW-0813">Transport</keyword>
<keyword id="KW-0926">Vacuole</keyword>
<protein>
    <recommendedName>
        <fullName evidence="6">Copper-transporting ATPase HMA4</fullName>
        <ecNumber evidence="4">7.2.2.8</ecNumber>
    </recommendedName>
    <alternativeName>
        <fullName evidence="6">Protein HEAVY METAL ATPASE 4</fullName>
        <shortName evidence="5">OsHMA4</shortName>
    </alternativeName>
</protein>
<sequence>MEQNGENHLKDPLLQADGGGSGASPAGASPRKERKTRKVMFNVRGISCASCAVSIETVVAGLKGVESVSVSPLQGQAVVQYRPEEADARTIKEAIEGLNFEVDELQEQEIAVCRLQIKGMACTSCSESVERALQMVPGVKKAAVGLALEEAKVHFDPNITSRDLIIEAIEDAGFGADLISSGDDVNKVHLKLEGVSSPEDIKLIQSRLESVEGVNNVECDTAGQTIIVAYDPDVTGPRLLIQCIQDAAQPPKYFNASLYSPPKQREAERHHEIRNYRNQFLWSCLFSVPVFMFSMVLPMISPFGDWLFYKVCNNMTIGMLLRWLLCSPVQFIIGWRFYVGAYHALKRGYSNMDVLVALGTNAAYFYSVYIVLKALTSESFEGQDFFETSAMLISFILLGKYLEVVAKGKTSDALSKLTELAPETACLLTLDKDGNAISETEISTQLLQRNDVIKIVPGEKVPVDGVVIKGQSHVNESMITGEARPIAKKPGDKVIGGTVNDNGCIIVKVTHVGSETALSQIVQLVEAAQLARAPVQKLADRISRFFVPTVVVAAFLTWLGWFVAGQFDIYPREWIPKAMDSFELALQFGISVLVVACPCALGLATPTAVMVATGKGASQGVLIKGGNALEKAHKVKAIIFDKTGTLTVGKPSVVQTKVFSKIPLLELCDLAAGAEANSEHPLSKAIVEYTKKLREQYGSHSDHIMESKDFEVHPGAGVSANVEGKLVLVGNKRLMQEFEVPISSEVEGHMSETEELARTCVLVAIDRTICGALSVSDPLKPEAGRAISYLSSMGISSIMVTGDNWATAKSIAKEVGIGTVFAEIDPVGKAEKIKDLQMKGLTVAMVGDGINDSPALAAADVGLAIGAGTDVAIEAADIVLMRSSLEDVITAIDLSRKTLSRIRLNYVWALGYNVLGMPVAAGVLFPFTGIRLPPWLAGACMAASSVSVVCSSLLLQLYKKPLHVEEVAAGPKNDPDLV</sequence>
<dbReference type="EC" id="7.2.2.8" evidence="4"/>
<dbReference type="EMBL" id="KU168832">
    <property type="protein sequence ID" value="ANQ29703.1"/>
    <property type="molecule type" value="mRNA"/>
</dbReference>
<dbReference type="EMBL" id="AP004184">
    <property type="protein sequence ID" value="BAD25263.1"/>
    <property type="molecule type" value="Genomic_DNA"/>
</dbReference>
<dbReference type="EMBL" id="AP004191">
    <property type="protein sequence ID" value="BAD25276.1"/>
    <property type="molecule type" value="Genomic_DNA"/>
</dbReference>
<dbReference type="EMBL" id="AP008208">
    <property type="protein sequence ID" value="BAF08107.1"/>
    <property type="molecule type" value="Genomic_DNA"/>
</dbReference>
<dbReference type="EMBL" id="AP014958">
    <property type="protein sequence ID" value="BAS77458.1"/>
    <property type="molecule type" value="Genomic_DNA"/>
</dbReference>
<dbReference type="EMBL" id="CM000139">
    <property type="protein sequence ID" value="EAZ22091.1"/>
    <property type="molecule type" value="Genomic_DNA"/>
</dbReference>
<dbReference type="RefSeq" id="XP_015626172.1">
    <property type="nucleotide sequence ID" value="XM_015770686.1"/>
</dbReference>
<dbReference type="PDB" id="8Q73">
    <property type="method" value="EM"/>
    <property type="resolution" value="3.58 A"/>
    <property type="chains" value="A=1-978"/>
</dbReference>
<dbReference type="PDB" id="8Q74">
    <property type="method" value="EM"/>
    <property type="resolution" value="3.68 A"/>
    <property type="chains" value="A=1-978"/>
</dbReference>
<dbReference type="PDB" id="8Q75">
    <property type="method" value="EM"/>
    <property type="resolution" value="3.20 A"/>
    <property type="chains" value="A=101-978"/>
</dbReference>
<dbReference type="PDB" id="8Q76">
    <property type="method" value="EM"/>
    <property type="resolution" value="3.29 A"/>
    <property type="chains" value="A=1-978"/>
</dbReference>
<dbReference type="PDBsum" id="8Q73"/>
<dbReference type="PDBsum" id="8Q74"/>
<dbReference type="PDBsum" id="8Q75"/>
<dbReference type="PDBsum" id="8Q76"/>
<dbReference type="EMDB" id="EMD-18202"/>
<dbReference type="EMDB" id="EMD-18203"/>
<dbReference type="EMDB" id="EMD-18204"/>
<dbReference type="EMDB" id="EMD-18205"/>
<dbReference type="SMR" id="Q6H7M3"/>
<dbReference type="FunCoup" id="Q6H7M3">
    <property type="interactions" value="1245"/>
</dbReference>
<dbReference type="STRING" id="39947.Q6H7M3"/>
<dbReference type="PaxDb" id="39947-Q6H7M3"/>
<dbReference type="EnsemblPlants" id="Os02t0196600-01">
    <property type="protein sequence ID" value="Os02t0196600-01"/>
    <property type="gene ID" value="Os02g0196600"/>
</dbReference>
<dbReference type="Gramene" id="Os02t0196600-01">
    <property type="protein sequence ID" value="Os02t0196600-01"/>
    <property type="gene ID" value="Os02g0196600"/>
</dbReference>
<dbReference type="KEGG" id="dosa:Os02g0196600"/>
<dbReference type="eggNOG" id="KOG0207">
    <property type="taxonomic scope" value="Eukaryota"/>
</dbReference>
<dbReference type="HOGENOM" id="CLU_001771_0_2_1"/>
<dbReference type="InParanoid" id="Q6H7M3"/>
<dbReference type="OMA" id="DHMMESK"/>
<dbReference type="OrthoDB" id="432719at2759"/>
<dbReference type="Proteomes" id="UP000000763">
    <property type="component" value="Chromosome 2"/>
</dbReference>
<dbReference type="Proteomes" id="UP000007752">
    <property type="component" value="Chromosome 2"/>
</dbReference>
<dbReference type="Proteomes" id="UP000059680">
    <property type="component" value="Chromosome 2"/>
</dbReference>
<dbReference type="GO" id="GO:0005886">
    <property type="term" value="C:plasma membrane"/>
    <property type="evidence" value="ECO:0000318"/>
    <property type="project" value="GO_Central"/>
</dbReference>
<dbReference type="GO" id="GO:0005774">
    <property type="term" value="C:vacuolar membrane"/>
    <property type="evidence" value="ECO:0007669"/>
    <property type="project" value="UniProtKB-SubCell"/>
</dbReference>
<dbReference type="GO" id="GO:0005524">
    <property type="term" value="F:ATP binding"/>
    <property type="evidence" value="ECO:0007669"/>
    <property type="project" value="UniProtKB-KW"/>
</dbReference>
<dbReference type="GO" id="GO:0016887">
    <property type="term" value="F:ATP hydrolysis activity"/>
    <property type="evidence" value="ECO:0007669"/>
    <property type="project" value="InterPro"/>
</dbReference>
<dbReference type="GO" id="GO:0005507">
    <property type="term" value="F:copper ion binding"/>
    <property type="evidence" value="ECO:0000318"/>
    <property type="project" value="GO_Central"/>
</dbReference>
<dbReference type="GO" id="GO:0140581">
    <property type="term" value="F:P-type monovalent copper transporter activity"/>
    <property type="evidence" value="ECO:0007669"/>
    <property type="project" value="UniProtKB-EC"/>
</dbReference>
<dbReference type="GO" id="GO:0010273">
    <property type="term" value="P:detoxification of copper ion"/>
    <property type="evidence" value="ECO:0000318"/>
    <property type="project" value="GO_Central"/>
</dbReference>
<dbReference type="GO" id="GO:0055085">
    <property type="term" value="P:transmembrane transport"/>
    <property type="evidence" value="ECO:0000318"/>
    <property type="project" value="GO_Central"/>
</dbReference>
<dbReference type="CDD" id="cd00371">
    <property type="entry name" value="HMA"/>
    <property type="match status" value="2"/>
</dbReference>
<dbReference type="CDD" id="cd02094">
    <property type="entry name" value="P-type_ATPase_Cu-like"/>
    <property type="match status" value="1"/>
</dbReference>
<dbReference type="FunFam" id="2.70.150.10:FF:000002">
    <property type="entry name" value="Copper-transporting ATPase 1, putative"/>
    <property type="match status" value="1"/>
</dbReference>
<dbReference type="FunFam" id="3.30.70.100:FF:000033">
    <property type="entry name" value="Copper-transporting ATPase HMA5"/>
    <property type="match status" value="1"/>
</dbReference>
<dbReference type="FunFam" id="3.40.50.1000:FF:000031">
    <property type="entry name" value="Probable copper-transporting ATPase HMA5"/>
    <property type="match status" value="1"/>
</dbReference>
<dbReference type="FunFam" id="3.30.70.100:FF:000077">
    <property type="entry name" value="Putative copper-transporting ATPase HMA5"/>
    <property type="match status" value="1"/>
</dbReference>
<dbReference type="Gene3D" id="3.30.70.100">
    <property type="match status" value="3"/>
</dbReference>
<dbReference type="Gene3D" id="3.40.1110.10">
    <property type="entry name" value="Calcium-transporting ATPase, cytoplasmic domain N"/>
    <property type="match status" value="2"/>
</dbReference>
<dbReference type="Gene3D" id="2.70.150.10">
    <property type="entry name" value="Calcium-transporting ATPase, cytoplasmic transduction domain A"/>
    <property type="match status" value="1"/>
</dbReference>
<dbReference type="Gene3D" id="3.40.50.1000">
    <property type="entry name" value="HAD superfamily/HAD-like"/>
    <property type="match status" value="1"/>
</dbReference>
<dbReference type="InterPro" id="IPR023299">
    <property type="entry name" value="ATPase_P-typ_cyto_dom_N"/>
</dbReference>
<dbReference type="InterPro" id="IPR018303">
    <property type="entry name" value="ATPase_P-typ_P_site"/>
</dbReference>
<dbReference type="InterPro" id="IPR023298">
    <property type="entry name" value="ATPase_P-typ_TM_dom_sf"/>
</dbReference>
<dbReference type="InterPro" id="IPR008250">
    <property type="entry name" value="ATPase_P-typ_transduc_dom_A_sf"/>
</dbReference>
<dbReference type="InterPro" id="IPR036412">
    <property type="entry name" value="HAD-like_sf"/>
</dbReference>
<dbReference type="InterPro" id="IPR023214">
    <property type="entry name" value="HAD_sf"/>
</dbReference>
<dbReference type="InterPro" id="IPR017969">
    <property type="entry name" value="Heavy-metal-associated_CS"/>
</dbReference>
<dbReference type="InterPro" id="IPR006122">
    <property type="entry name" value="HMA_Cu_ion-bd"/>
</dbReference>
<dbReference type="InterPro" id="IPR006121">
    <property type="entry name" value="HMA_dom"/>
</dbReference>
<dbReference type="InterPro" id="IPR036163">
    <property type="entry name" value="HMA_dom_sf"/>
</dbReference>
<dbReference type="InterPro" id="IPR027256">
    <property type="entry name" value="P-typ_ATPase_IB"/>
</dbReference>
<dbReference type="InterPro" id="IPR001757">
    <property type="entry name" value="P_typ_ATPase"/>
</dbReference>
<dbReference type="InterPro" id="IPR044492">
    <property type="entry name" value="P_typ_ATPase_HD_dom"/>
</dbReference>
<dbReference type="NCBIfam" id="TIGR01525">
    <property type="entry name" value="ATPase-IB_hvy"/>
    <property type="match status" value="1"/>
</dbReference>
<dbReference type="NCBIfam" id="TIGR01494">
    <property type="entry name" value="ATPase_P-type"/>
    <property type="match status" value="1"/>
</dbReference>
<dbReference type="NCBIfam" id="TIGR00003">
    <property type="entry name" value="copper ion binding protein"/>
    <property type="match status" value="2"/>
</dbReference>
<dbReference type="PANTHER" id="PTHR46594:SF2">
    <property type="entry name" value="COPPER-TRANSPORTING ATPASE HMA4"/>
    <property type="match status" value="1"/>
</dbReference>
<dbReference type="PANTHER" id="PTHR46594">
    <property type="entry name" value="P-TYPE CATION-TRANSPORTING ATPASE"/>
    <property type="match status" value="1"/>
</dbReference>
<dbReference type="Pfam" id="PF00122">
    <property type="entry name" value="E1-E2_ATPase"/>
    <property type="match status" value="1"/>
</dbReference>
<dbReference type="Pfam" id="PF00403">
    <property type="entry name" value="HMA"/>
    <property type="match status" value="2"/>
</dbReference>
<dbReference type="Pfam" id="PF00702">
    <property type="entry name" value="Hydrolase"/>
    <property type="match status" value="1"/>
</dbReference>
<dbReference type="PRINTS" id="PR00119">
    <property type="entry name" value="CATATPASE"/>
</dbReference>
<dbReference type="PRINTS" id="PR00120">
    <property type="entry name" value="HATPASE"/>
</dbReference>
<dbReference type="SFLD" id="SFLDG00002">
    <property type="entry name" value="C1.7:_P-type_atpase_like"/>
    <property type="match status" value="1"/>
</dbReference>
<dbReference type="SFLD" id="SFLDF00027">
    <property type="entry name" value="p-type_atpase"/>
    <property type="match status" value="1"/>
</dbReference>
<dbReference type="SUPFAM" id="SSF81653">
    <property type="entry name" value="Calcium ATPase, transduction domain A"/>
    <property type="match status" value="1"/>
</dbReference>
<dbReference type="SUPFAM" id="SSF81665">
    <property type="entry name" value="Calcium ATPase, transmembrane domain M"/>
    <property type="match status" value="1"/>
</dbReference>
<dbReference type="SUPFAM" id="SSF56784">
    <property type="entry name" value="HAD-like"/>
    <property type="match status" value="1"/>
</dbReference>
<dbReference type="SUPFAM" id="SSF55008">
    <property type="entry name" value="HMA, heavy metal-associated domain"/>
    <property type="match status" value="3"/>
</dbReference>
<dbReference type="PROSITE" id="PS00154">
    <property type="entry name" value="ATPASE_E1_E2"/>
    <property type="match status" value="1"/>
</dbReference>
<dbReference type="PROSITE" id="PS01047">
    <property type="entry name" value="HMA_1"/>
    <property type="match status" value="1"/>
</dbReference>
<dbReference type="PROSITE" id="PS50846">
    <property type="entry name" value="HMA_2"/>
    <property type="match status" value="3"/>
</dbReference>
<organism>
    <name type="scientific">Oryza sativa subsp. japonica</name>
    <name type="common">Rice</name>
    <dbReference type="NCBI Taxonomy" id="39947"/>
    <lineage>
        <taxon>Eukaryota</taxon>
        <taxon>Viridiplantae</taxon>
        <taxon>Streptophyta</taxon>
        <taxon>Embryophyta</taxon>
        <taxon>Tracheophyta</taxon>
        <taxon>Spermatophyta</taxon>
        <taxon>Magnoliopsida</taxon>
        <taxon>Liliopsida</taxon>
        <taxon>Poales</taxon>
        <taxon>Poaceae</taxon>
        <taxon>BOP clade</taxon>
        <taxon>Oryzoideae</taxon>
        <taxon>Oryzeae</taxon>
        <taxon>Oryzinae</taxon>
        <taxon>Oryza</taxon>
        <taxon>Oryza sativa</taxon>
    </lineage>
</organism>
<proteinExistence type="evidence at protein level"/>
<accession>Q6H7M3</accession>
<accession>A0A1B1ELV0</accession>
<reference key="1">
    <citation type="journal article" date="2016" name="Nat. Commun.">
        <title>A heavy metal P-type ATPase OsHMA4 prevents copper accumulation in rice grain.</title>
        <authorList>
            <person name="Huang X.-Y."/>
            <person name="Deng F."/>
            <person name="Yamaji N."/>
            <person name="Pinson S.R.M."/>
            <person name="Fujii-Kashino M."/>
            <person name="Danku J."/>
            <person name="Douglas A."/>
            <person name="Guerinot M.L."/>
            <person name="Salt D.E."/>
            <person name="Ma J.F."/>
        </authorList>
    </citation>
    <scope>NUCLEOTIDE SEQUENCE [MRNA]</scope>
    <scope>FUNCTION</scope>
    <scope>CATALYTIC ACTIVITY</scope>
    <scope>SUBCELLULAR LOCATION</scope>
    <scope>POLYMORPHISM</scope>
    <scope>VARIANT ALA-914</scope>
    <scope>TISSUE SPECIFICITY</scope>
    <scope>INDUCTION BY COPPER</scope>
    <scope>DISRUPTION PHENOTYPE</scope>
    <source>
        <strain>cv. Lemont</strain>
    </source>
</reference>
<reference key="2">
    <citation type="journal article" date="2005" name="Nature">
        <title>The map-based sequence of the rice genome.</title>
        <authorList>
            <consortium name="International rice genome sequencing project (IRGSP)"/>
        </authorList>
    </citation>
    <scope>NUCLEOTIDE SEQUENCE [LARGE SCALE GENOMIC DNA]</scope>
    <source>
        <strain>cv. Nipponbare</strain>
    </source>
</reference>
<reference key="3">
    <citation type="journal article" date="2008" name="Nucleic Acids Res.">
        <title>The rice annotation project database (RAP-DB): 2008 update.</title>
        <authorList>
            <consortium name="The rice annotation project (RAP)"/>
        </authorList>
    </citation>
    <scope>GENOME REANNOTATION</scope>
    <source>
        <strain>cv. Nipponbare</strain>
    </source>
</reference>
<reference key="4">
    <citation type="journal article" date="2013" name="Rice">
        <title>Improvement of the Oryza sativa Nipponbare reference genome using next generation sequence and optical map data.</title>
        <authorList>
            <person name="Kawahara Y."/>
            <person name="de la Bastide M."/>
            <person name="Hamilton J.P."/>
            <person name="Kanamori H."/>
            <person name="McCombie W.R."/>
            <person name="Ouyang S."/>
            <person name="Schwartz D.C."/>
            <person name="Tanaka T."/>
            <person name="Wu J."/>
            <person name="Zhou S."/>
            <person name="Childs K.L."/>
            <person name="Davidson R.M."/>
            <person name="Lin H."/>
            <person name="Quesada-Ocampo L."/>
            <person name="Vaillancourt B."/>
            <person name="Sakai H."/>
            <person name="Lee S.S."/>
            <person name="Kim J."/>
            <person name="Numa H."/>
            <person name="Itoh T."/>
            <person name="Buell C.R."/>
            <person name="Matsumoto T."/>
        </authorList>
    </citation>
    <scope>GENOME REANNOTATION</scope>
    <source>
        <strain>cv. Nipponbare</strain>
    </source>
</reference>
<reference key="5">
    <citation type="journal article" date="2005" name="PLoS Biol.">
        <title>The genomes of Oryza sativa: a history of duplications.</title>
        <authorList>
            <person name="Yu J."/>
            <person name="Wang J."/>
            <person name="Lin W."/>
            <person name="Li S."/>
            <person name="Li H."/>
            <person name="Zhou J."/>
            <person name="Ni P."/>
            <person name="Dong W."/>
            <person name="Hu S."/>
            <person name="Zeng C."/>
            <person name="Zhang J."/>
            <person name="Zhang Y."/>
            <person name="Li R."/>
            <person name="Xu Z."/>
            <person name="Li S."/>
            <person name="Li X."/>
            <person name="Zheng H."/>
            <person name="Cong L."/>
            <person name="Lin L."/>
            <person name="Yin J."/>
            <person name="Geng J."/>
            <person name="Li G."/>
            <person name="Shi J."/>
            <person name="Liu J."/>
            <person name="Lv H."/>
            <person name="Li J."/>
            <person name="Wang J."/>
            <person name="Deng Y."/>
            <person name="Ran L."/>
            <person name="Shi X."/>
            <person name="Wang X."/>
            <person name="Wu Q."/>
            <person name="Li C."/>
            <person name="Ren X."/>
            <person name="Wang J."/>
            <person name="Wang X."/>
            <person name="Li D."/>
            <person name="Liu D."/>
            <person name="Zhang X."/>
            <person name="Ji Z."/>
            <person name="Zhao W."/>
            <person name="Sun Y."/>
            <person name="Zhang Z."/>
            <person name="Bao J."/>
            <person name="Han Y."/>
            <person name="Dong L."/>
            <person name="Ji J."/>
            <person name="Chen P."/>
            <person name="Wu S."/>
            <person name="Liu J."/>
            <person name="Xiao Y."/>
            <person name="Bu D."/>
            <person name="Tan J."/>
            <person name="Yang L."/>
            <person name="Ye C."/>
            <person name="Zhang J."/>
            <person name="Xu J."/>
            <person name="Zhou Y."/>
            <person name="Yu Y."/>
            <person name="Zhang B."/>
            <person name="Zhuang S."/>
            <person name="Wei H."/>
            <person name="Liu B."/>
            <person name="Lei M."/>
            <person name="Yu H."/>
            <person name="Li Y."/>
            <person name="Xu H."/>
            <person name="Wei S."/>
            <person name="He X."/>
            <person name="Fang L."/>
            <person name="Zhang Z."/>
            <person name="Zhang Y."/>
            <person name="Huang X."/>
            <person name="Su Z."/>
            <person name="Tong W."/>
            <person name="Li J."/>
            <person name="Tong Z."/>
            <person name="Li S."/>
            <person name="Ye J."/>
            <person name="Wang L."/>
            <person name="Fang L."/>
            <person name="Lei T."/>
            <person name="Chen C.-S."/>
            <person name="Chen H.-C."/>
            <person name="Xu Z."/>
            <person name="Li H."/>
            <person name="Huang H."/>
            <person name="Zhang F."/>
            <person name="Xu H."/>
            <person name="Li N."/>
            <person name="Zhao C."/>
            <person name="Li S."/>
            <person name="Dong L."/>
            <person name="Huang Y."/>
            <person name="Li L."/>
            <person name="Xi Y."/>
            <person name="Qi Q."/>
            <person name="Li W."/>
            <person name="Zhang B."/>
            <person name="Hu W."/>
            <person name="Zhang Y."/>
            <person name="Tian X."/>
            <person name="Jiao Y."/>
            <person name="Liang X."/>
            <person name="Jin J."/>
            <person name="Gao L."/>
            <person name="Zheng W."/>
            <person name="Hao B."/>
            <person name="Liu S.-M."/>
            <person name="Wang W."/>
            <person name="Yuan L."/>
            <person name="Cao M."/>
            <person name="McDermott J."/>
            <person name="Samudrala R."/>
            <person name="Wang J."/>
            <person name="Wong G.K.-S."/>
            <person name="Yang H."/>
        </authorList>
    </citation>
    <scope>NUCLEOTIDE SEQUENCE [LARGE SCALE GENOMIC DNA]</scope>
    <source>
        <strain>cv. Nipponbare</strain>
    </source>
</reference>
<feature type="chain" id="PRO_0000440965" description="Copper-transporting ATPase HMA4">
    <location>
        <begin position="1"/>
        <end position="978"/>
    </location>
</feature>
<feature type="transmembrane region" description="Helical" evidence="1">
    <location>
        <begin position="280"/>
        <end position="300"/>
    </location>
</feature>
<feature type="transmembrane region" description="Helical" evidence="1">
    <location>
        <begin position="315"/>
        <end position="335"/>
    </location>
</feature>
<feature type="transmembrane region" description="Helical" evidence="1">
    <location>
        <begin position="352"/>
        <end position="372"/>
    </location>
</feature>
<feature type="transmembrane region" description="Helical" evidence="1">
    <location>
        <begin position="385"/>
        <end position="405"/>
    </location>
</feature>
<feature type="transmembrane region" description="Helical" evidence="1">
    <location>
        <begin position="545"/>
        <end position="565"/>
    </location>
</feature>
<feature type="transmembrane region" description="Helical" evidence="1">
    <location>
        <begin position="584"/>
        <end position="604"/>
    </location>
</feature>
<feature type="transmembrane region" description="Helical" evidence="1">
    <location>
        <begin position="907"/>
        <end position="927"/>
    </location>
</feature>
<feature type="transmembrane region" description="Helical" evidence="1">
    <location>
        <begin position="935"/>
        <end position="955"/>
    </location>
</feature>
<feature type="domain" description="HMA 1" evidence="2">
    <location>
        <begin position="37"/>
        <end position="103"/>
    </location>
</feature>
<feature type="domain" description="HMA 2" evidence="2">
    <location>
        <begin position="111"/>
        <end position="177"/>
    </location>
</feature>
<feature type="domain" description="HMA 3" evidence="2">
    <location>
        <begin position="186"/>
        <end position="252"/>
    </location>
</feature>
<feature type="region of interest" description="Disordered" evidence="3">
    <location>
        <begin position="1"/>
        <end position="35"/>
    </location>
</feature>
<feature type="compositionally biased region" description="Basic and acidic residues" evidence="3">
    <location>
        <begin position="1"/>
        <end position="11"/>
    </location>
</feature>
<feature type="binding site" evidence="2">
    <location>
        <position position="48"/>
    </location>
    <ligand>
        <name>Cu(+)</name>
        <dbReference type="ChEBI" id="CHEBI:49552"/>
        <label>1</label>
    </ligand>
</feature>
<feature type="binding site" evidence="2">
    <location>
        <position position="51"/>
    </location>
    <ligand>
        <name>Cu(+)</name>
        <dbReference type="ChEBI" id="CHEBI:49552"/>
        <label>1</label>
    </ligand>
</feature>
<feature type="binding site" evidence="2">
    <location>
        <position position="122"/>
    </location>
    <ligand>
        <name>Cu(+)</name>
        <dbReference type="ChEBI" id="CHEBI:49552"/>
        <label>2</label>
    </ligand>
</feature>
<feature type="binding site" evidence="2">
    <location>
        <position position="125"/>
    </location>
    <ligand>
        <name>Cu(+)</name>
        <dbReference type="ChEBI" id="CHEBI:49552"/>
        <label>2</label>
    </ligand>
</feature>
<feature type="sequence variant" description="In strain: cv. Lemont; increases copper transport activity." evidence="4">
    <original>V</original>
    <variation>A</variation>
    <location>
        <position position="914"/>
    </location>
</feature>
<feature type="strand" evidence="11">
    <location>
        <begin position="186"/>
        <end position="194"/>
    </location>
</feature>
<feature type="helix" evidence="11">
    <location>
        <begin position="198"/>
        <end position="209"/>
    </location>
</feature>
<feature type="strand" evidence="11">
    <location>
        <begin position="215"/>
        <end position="220"/>
    </location>
</feature>
<feature type="turn" evidence="11">
    <location>
        <begin position="221"/>
        <end position="224"/>
    </location>
</feature>
<feature type="strand" evidence="11">
    <location>
        <begin position="225"/>
        <end position="229"/>
    </location>
</feature>
<feature type="strand" evidence="11">
    <location>
        <begin position="232"/>
        <end position="235"/>
    </location>
</feature>
<feature type="helix" evidence="11">
    <location>
        <begin position="237"/>
        <end position="245"/>
    </location>
</feature>
<feature type="strand" evidence="11">
    <location>
        <begin position="255"/>
        <end position="257"/>
    </location>
</feature>
<feature type="helix" evidence="11">
    <location>
        <begin position="264"/>
        <end position="295"/>
    </location>
</feature>
<feature type="turn" evidence="11">
    <location>
        <begin position="296"/>
        <end position="299"/>
    </location>
</feature>
<feature type="strand" evidence="11">
    <location>
        <begin position="300"/>
        <end position="302"/>
    </location>
</feature>
<feature type="helix" evidence="11">
    <location>
        <begin position="306"/>
        <end position="308"/>
    </location>
</feature>
<feature type="helix" evidence="11">
    <location>
        <begin position="317"/>
        <end position="331"/>
    </location>
</feature>
<feature type="turn" evidence="11">
    <location>
        <begin position="332"/>
        <end position="334"/>
    </location>
</feature>
<feature type="helix" evidence="11">
    <location>
        <begin position="335"/>
        <end position="343"/>
    </location>
</feature>
<feature type="strand" evidence="11">
    <location>
        <begin position="345"/>
        <end position="347"/>
    </location>
</feature>
<feature type="helix" evidence="11">
    <location>
        <begin position="355"/>
        <end position="376"/>
    </location>
</feature>
<feature type="strand" evidence="11">
    <location>
        <begin position="377"/>
        <end position="379"/>
    </location>
</feature>
<feature type="helix" evidence="11">
    <location>
        <begin position="386"/>
        <end position="406"/>
    </location>
</feature>
<feature type="strand" evidence="11">
    <location>
        <begin position="409"/>
        <end position="411"/>
    </location>
</feature>
<feature type="helix" evidence="11">
    <location>
        <begin position="415"/>
        <end position="420"/>
    </location>
</feature>
<feature type="strand" evidence="11">
    <location>
        <begin position="423"/>
        <end position="427"/>
    </location>
</feature>
<feature type="strand" evidence="11">
    <location>
        <begin position="430"/>
        <end position="434"/>
    </location>
</feature>
<feature type="strand" evidence="11">
    <location>
        <begin position="441"/>
        <end position="443"/>
    </location>
</feature>
<feature type="helix" evidence="11">
    <location>
        <begin position="444"/>
        <end position="446"/>
    </location>
</feature>
<feature type="strand" evidence="11">
    <location>
        <begin position="465"/>
        <end position="469"/>
    </location>
</feature>
<feature type="strand" evidence="11">
    <location>
        <begin position="472"/>
        <end position="474"/>
    </location>
</feature>
<feature type="strand" evidence="11">
    <location>
        <begin position="478"/>
        <end position="480"/>
    </location>
</feature>
<feature type="strand" evidence="11">
    <location>
        <begin position="486"/>
        <end position="488"/>
    </location>
</feature>
<feature type="strand" evidence="11">
    <location>
        <begin position="506"/>
        <end position="509"/>
    </location>
</feature>
<feature type="helix" evidence="11">
    <location>
        <begin position="513"/>
        <end position="515"/>
    </location>
</feature>
<feature type="helix" evidence="11">
    <location>
        <begin position="517"/>
        <end position="529"/>
    </location>
</feature>
<feature type="helix" evidence="11">
    <location>
        <begin position="538"/>
        <end position="544"/>
    </location>
</feature>
<feature type="helix" evidence="11">
    <location>
        <begin position="547"/>
        <end position="566"/>
    </location>
</feature>
<feature type="helix" evidence="11">
    <location>
        <begin position="572"/>
        <end position="574"/>
    </location>
</feature>
<feature type="helix" evidence="11">
    <location>
        <begin position="581"/>
        <end position="595"/>
    </location>
</feature>
<feature type="strand" evidence="11">
    <location>
        <begin position="599"/>
        <end position="601"/>
    </location>
</feature>
<feature type="turn" evidence="11">
    <location>
        <begin position="602"/>
        <end position="605"/>
    </location>
</feature>
<feature type="helix" evidence="11">
    <location>
        <begin position="606"/>
        <end position="619"/>
    </location>
</feature>
<feature type="strand" evidence="11">
    <location>
        <begin position="621"/>
        <end position="623"/>
    </location>
</feature>
<feature type="helix" evidence="11">
    <location>
        <begin position="626"/>
        <end position="631"/>
    </location>
</feature>
<feature type="strand" evidence="11">
    <location>
        <begin position="637"/>
        <end position="640"/>
    </location>
</feature>
<feature type="turn" evidence="11">
    <location>
        <begin position="642"/>
        <end position="645"/>
    </location>
</feature>
<feature type="strand" evidence="11">
    <location>
        <begin position="652"/>
        <end position="654"/>
    </location>
</feature>
<feature type="helix" evidence="11">
    <location>
        <begin position="664"/>
        <end position="675"/>
    </location>
</feature>
<feature type="helix" evidence="11">
    <location>
        <begin position="681"/>
        <end position="696"/>
    </location>
</feature>
<feature type="strand" evidence="11">
    <location>
        <begin position="697"/>
        <end position="699"/>
    </location>
</feature>
<feature type="turn" evidence="11">
    <location>
        <begin position="714"/>
        <end position="716"/>
    </location>
</feature>
<feature type="strand" evidence="11">
    <location>
        <begin position="717"/>
        <end position="722"/>
    </location>
</feature>
<feature type="strand" evidence="11">
    <location>
        <begin position="725"/>
        <end position="730"/>
    </location>
</feature>
<feature type="helix" evidence="11">
    <location>
        <begin position="732"/>
        <end position="737"/>
    </location>
</feature>
<feature type="helix" evidence="11">
    <location>
        <begin position="745"/>
        <end position="747"/>
    </location>
</feature>
<feature type="turn" evidence="11">
    <location>
        <begin position="751"/>
        <end position="754"/>
    </location>
</feature>
<feature type="strand" evidence="11">
    <location>
        <begin position="755"/>
        <end position="761"/>
    </location>
</feature>
<feature type="strand" evidence="11">
    <location>
        <begin position="774"/>
        <end position="776"/>
    </location>
</feature>
<feature type="helix" evidence="11">
    <location>
        <begin position="783"/>
        <end position="792"/>
    </location>
</feature>
<feature type="strand" evidence="11">
    <location>
        <begin position="796"/>
        <end position="800"/>
    </location>
</feature>
<feature type="helix" evidence="11">
    <location>
        <begin position="805"/>
        <end position="815"/>
    </location>
</feature>
<feature type="strand" evidence="11">
    <location>
        <begin position="819"/>
        <end position="821"/>
    </location>
</feature>
<feature type="helix" evidence="11">
    <location>
        <begin position="826"/>
        <end position="838"/>
    </location>
</feature>
<feature type="strand" evidence="11">
    <location>
        <begin position="843"/>
        <end position="847"/>
    </location>
</feature>
<feature type="helix" evidence="11">
    <location>
        <begin position="850"/>
        <end position="852"/>
    </location>
</feature>
<feature type="helix" evidence="11">
    <location>
        <begin position="853"/>
        <end position="858"/>
    </location>
</feature>
<feature type="strand" evidence="11">
    <location>
        <begin position="859"/>
        <end position="865"/>
    </location>
</feature>
<feature type="helix" evidence="11">
    <location>
        <begin position="870"/>
        <end position="875"/>
    </location>
</feature>
<feature type="strand" evidence="11">
    <location>
        <begin position="877"/>
        <end position="883"/>
    </location>
</feature>
<feature type="helix" evidence="11">
    <location>
        <begin position="886"/>
        <end position="899"/>
    </location>
</feature>
<feature type="turn" evidence="11">
    <location>
        <begin position="900"/>
        <end position="902"/>
    </location>
</feature>
<feature type="helix" evidence="11">
    <location>
        <begin position="903"/>
        <end position="921"/>
    </location>
</feature>
<feature type="turn" evidence="11">
    <location>
        <begin position="922"/>
        <end position="927"/>
    </location>
</feature>
<feature type="helix" evidence="11">
    <location>
        <begin position="935"/>
        <end position="938"/>
    </location>
</feature>
<feature type="helix" evidence="11">
    <location>
        <begin position="941"/>
        <end position="947"/>
    </location>
</feature>
<name>HMA4_ORYSJ</name>